<feature type="chain" id="PRO_0000389709" description="Acetyl-coenzyme A carboxylase carboxyl transferase subunit beta">
    <location>
        <begin position="1"/>
        <end position="280"/>
    </location>
</feature>
<feature type="domain" description="CoA carboxyltransferase N-terminal" evidence="2">
    <location>
        <begin position="26"/>
        <end position="280"/>
    </location>
</feature>
<feature type="zinc finger region" description="C4-type" evidence="1">
    <location>
        <begin position="30"/>
        <end position="52"/>
    </location>
</feature>
<feature type="binding site" evidence="1">
    <location>
        <position position="30"/>
    </location>
    <ligand>
        <name>Zn(2+)</name>
        <dbReference type="ChEBI" id="CHEBI:29105"/>
    </ligand>
</feature>
<feature type="binding site" evidence="1">
    <location>
        <position position="33"/>
    </location>
    <ligand>
        <name>Zn(2+)</name>
        <dbReference type="ChEBI" id="CHEBI:29105"/>
    </ligand>
</feature>
<feature type="binding site" evidence="1">
    <location>
        <position position="49"/>
    </location>
    <ligand>
        <name>Zn(2+)</name>
        <dbReference type="ChEBI" id="CHEBI:29105"/>
    </ligand>
</feature>
<feature type="binding site" evidence="1">
    <location>
        <position position="52"/>
    </location>
    <ligand>
        <name>Zn(2+)</name>
        <dbReference type="ChEBI" id="CHEBI:29105"/>
    </ligand>
</feature>
<organism>
    <name type="scientific">Carboxydothermus hydrogenoformans (strain ATCC BAA-161 / DSM 6008 / Z-2901)</name>
    <dbReference type="NCBI Taxonomy" id="246194"/>
    <lineage>
        <taxon>Bacteria</taxon>
        <taxon>Bacillati</taxon>
        <taxon>Bacillota</taxon>
        <taxon>Clostridia</taxon>
        <taxon>Thermoanaerobacterales</taxon>
        <taxon>Thermoanaerobacteraceae</taxon>
        <taxon>Carboxydothermus</taxon>
    </lineage>
</organism>
<name>ACCD_CARHZ</name>
<gene>
    <name evidence="1" type="primary">accD</name>
    <name type="ordered locus">CHY_1141</name>
</gene>
<comment type="function">
    <text evidence="1">Component of the acetyl coenzyme A carboxylase (ACC) complex. Biotin carboxylase (BC) catalyzes the carboxylation of biotin on its carrier protein (BCCP) and then the CO(2) group is transferred by the transcarboxylase to acetyl-CoA to form malonyl-CoA.</text>
</comment>
<comment type="catalytic activity">
    <reaction evidence="1">
        <text>N(6)-carboxybiotinyl-L-lysyl-[protein] + acetyl-CoA = N(6)-biotinyl-L-lysyl-[protein] + malonyl-CoA</text>
        <dbReference type="Rhea" id="RHEA:54728"/>
        <dbReference type="Rhea" id="RHEA-COMP:10505"/>
        <dbReference type="Rhea" id="RHEA-COMP:10506"/>
        <dbReference type="ChEBI" id="CHEBI:57288"/>
        <dbReference type="ChEBI" id="CHEBI:57384"/>
        <dbReference type="ChEBI" id="CHEBI:83144"/>
        <dbReference type="ChEBI" id="CHEBI:83145"/>
        <dbReference type="EC" id="2.1.3.15"/>
    </reaction>
</comment>
<comment type="cofactor">
    <cofactor evidence="1">
        <name>Zn(2+)</name>
        <dbReference type="ChEBI" id="CHEBI:29105"/>
    </cofactor>
    <text evidence="1">Binds 1 zinc ion per subunit.</text>
</comment>
<comment type="pathway">
    <text evidence="1">Lipid metabolism; malonyl-CoA biosynthesis; malonyl-CoA from acetyl-CoA: step 1/1.</text>
</comment>
<comment type="subunit">
    <text evidence="1">Acetyl-CoA carboxylase is a heterohexamer composed of biotin carboxyl carrier protein (AccB), biotin carboxylase (AccC) and two subunits each of ACCase subunit alpha (AccA) and ACCase subunit beta (AccD).</text>
</comment>
<comment type="subcellular location">
    <subcellularLocation>
        <location evidence="1">Cytoplasm</location>
    </subcellularLocation>
</comment>
<comment type="similarity">
    <text evidence="1">Belongs to the AccD/PCCB family.</text>
</comment>
<dbReference type="EC" id="2.1.3.15" evidence="1"/>
<dbReference type="EMBL" id="CP000141">
    <property type="protein sequence ID" value="ABB15576.1"/>
    <property type="molecule type" value="Genomic_DNA"/>
</dbReference>
<dbReference type="RefSeq" id="WP_011344062.1">
    <property type="nucleotide sequence ID" value="NC_007503.1"/>
</dbReference>
<dbReference type="SMR" id="Q3ACZ8"/>
<dbReference type="FunCoup" id="Q3ACZ8">
    <property type="interactions" value="241"/>
</dbReference>
<dbReference type="STRING" id="246194.CHY_1141"/>
<dbReference type="KEGG" id="chy:CHY_1141"/>
<dbReference type="eggNOG" id="COG0777">
    <property type="taxonomic scope" value="Bacteria"/>
</dbReference>
<dbReference type="HOGENOM" id="CLU_015486_1_1_9"/>
<dbReference type="InParanoid" id="Q3ACZ8"/>
<dbReference type="OrthoDB" id="9772975at2"/>
<dbReference type="UniPathway" id="UPA00655">
    <property type="reaction ID" value="UER00711"/>
</dbReference>
<dbReference type="Proteomes" id="UP000002706">
    <property type="component" value="Chromosome"/>
</dbReference>
<dbReference type="GO" id="GO:0009317">
    <property type="term" value="C:acetyl-CoA carboxylase complex"/>
    <property type="evidence" value="ECO:0007669"/>
    <property type="project" value="InterPro"/>
</dbReference>
<dbReference type="GO" id="GO:0003989">
    <property type="term" value="F:acetyl-CoA carboxylase activity"/>
    <property type="evidence" value="ECO:0007669"/>
    <property type="project" value="InterPro"/>
</dbReference>
<dbReference type="GO" id="GO:0005524">
    <property type="term" value="F:ATP binding"/>
    <property type="evidence" value="ECO:0007669"/>
    <property type="project" value="UniProtKB-KW"/>
</dbReference>
<dbReference type="GO" id="GO:0016743">
    <property type="term" value="F:carboxyl- or carbamoyltransferase activity"/>
    <property type="evidence" value="ECO:0007669"/>
    <property type="project" value="UniProtKB-UniRule"/>
</dbReference>
<dbReference type="GO" id="GO:0008270">
    <property type="term" value="F:zinc ion binding"/>
    <property type="evidence" value="ECO:0007669"/>
    <property type="project" value="UniProtKB-UniRule"/>
</dbReference>
<dbReference type="GO" id="GO:0006633">
    <property type="term" value="P:fatty acid biosynthetic process"/>
    <property type="evidence" value="ECO:0007669"/>
    <property type="project" value="UniProtKB-KW"/>
</dbReference>
<dbReference type="GO" id="GO:2001295">
    <property type="term" value="P:malonyl-CoA biosynthetic process"/>
    <property type="evidence" value="ECO:0007669"/>
    <property type="project" value="UniProtKB-UniRule"/>
</dbReference>
<dbReference type="Gene3D" id="3.90.226.10">
    <property type="entry name" value="2-enoyl-CoA Hydratase, Chain A, domain 1"/>
    <property type="match status" value="1"/>
</dbReference>
<dbReference type="HAMAP" id="MF_01395">
    <property type="entry name" value="AcetylCoA_CT_beta"/>
    <property type="match status" value="1"/>
</dbReference>
<dbReference type="InterPro" id="IPR034733">
    <property type="entry name" value="AcCoA_carboxyl_beta"/>
</dbReference>
<dbReference type="InterPro" id="IPR000438">
    <property type="entry name" value="Acetyl_CoA_COase_Trfase_b_su"/>
</dbReference>
<dbReference type="InterPro" id="IPR029045">
    <property type="entry name" value="ClpP/crotonase-like_dom_sf"/>
</dbReference>
<dbReference type="InterPro" id="IPR011762">
    <property type="entry name" value="COA_CT_N"/>
</dbReference>
<dbReference type="InterPro" id="IPR041010">
    <property type="entry name" value="Znf-ACC"/>
</dbReference>
<dbReference type="NCBIfam" id="TIGR00515">
    <property type="entry name" value="accD"/>
    <property type="match status" value="1"/>
</dbReference>
<dbReference type="PANTHER" id="PTHR42995">
    <property type="entry name" value="ACETYL-COENZYME A CARBOXYLASE CARBOXYL TRANSFERASE SUBUNIT BETA, CHLOROPLASTIC"/>
    <property type="match status" value="1"/>
</dbReference>
<dbReference type="PANTHER" id="PTHR42995:SF5">
    <property type="entry name" value="ACETYL-COENZYME A CARBOXYLASE CARBOXYL TRANSFERASE SUBUNIT BETA, CHLOROPLASTIC"/>
    <property type="match status" value="1"/>
</dbReference>
<dbReference type="Pfam" id="PF01039">
    <property type="entry name" value="Carboxyl_trans"/>
    <property type="match status" value="1"/>
</dbReference>
<dbReference type="Pfam" id="PF17848">
    <property type="entry name" value="Zn_ribbon_ACC"/>
    <property type="match status" value="1"/>
</dbReference>
<dbReference type="PRINTS" id="PR01070">
    <property type="entry name" value="ACCCTRFRASEB"/>
</dbReference>
<dbReference type="SUPFAM" id="SSF52096">
    <property type="entry name" value="ClpP/crotonase"/>
    <property type="match status" value="1"/>
</dbReference>
<dbReference type="PROSITE" id="PS50980">
    <property type="entry name" value="COA_CT_NTER"/>
    <property type="match status" value="1"/>
</dbReference>
<sequence length="280" mass="31271">MFDFFRKSKYVTVKPETKQKEIPDGLWQKCPRCGEIIFNKELEKNFKVCPKCGYHFKISAWERIKLLCDENSFVEFGREISGGNPLNFPGYEEKLAEAREKTGLKEAVVTGLGKINGREVVLAIMDPNFIMASMGTAVGEKICLAMEKALEKKLPLVVFTASGGARMQEGIFSLMQMAKTVQLVNRLNAEKIFYLVVMTDPTTGGVSASFAALGDIILAEPGALIGFAGPRVIEQTIRQKLPEGFQRAEFLEQHGFIDAVVSREQQKEVITKLLAWHSQK</sequence>
<proteinExistence type="inferred from homology"/>
<accession>Q3ACZ8</accession>
<keyword id="KW-0067">ATP-binding</keyword>
<keyword id="KW-0963">Cytoplasm</keyword>
<keyword id="KW-0275">Fatty acid biosynthesis</keyword>
<keyword id="KW-0276">Fatty acid metabolism</keyword>
<keyword id="KW-0444">Lipid biosynthesis</keyword>
<keyword id="KW-0443">Lipid metabolism</keyword>
<keyword id="KW-0479">Metal-binding</keyword>
<keyword id="KW-0547">Nucleotide-binding</keyword>
<keyword id="KW-1185">Reference proteome</keyword>
<keyword id="KW-0808">Transferase</keyword>
<keyword id="KW-0862">Zinc</keyword>
<keyword id="KW-0863">Zinc-finger</keyword>
<reference key="1">
    <citation type="journal article" date="2005" name="PLoS Genet.">
        <title>Life in hot carbon monoxide: the complete genome sequence of Carboxydothermus hydrogenoformans Z-2901.</title>
        <authorList>
            <person name="Wu M."/>
            <person name="Ren Q."/>
            <person name="Durkin A.S."/>
            <person name="Daugherty S.C."/>
            <person name="Brinkac L.M."/>
            <person name="Dodson R.J."/>
            <person name="Madupu R."/>
            <person name="Sullivan S.A."/>
            <person name="Kolonay J.F."/>
            <person name="Nelson W.C."/>
            <person name="Tallon L.J."/>
            <person name="Jones K.M."/>
            <person name="Ulrich L.E."/>
            <person name="Gonzalez J.M."/>
            <person name="Zhulin I.B."/>
            <person name="Robb F.T."/>
            <person name="Eisen J.A."/>
        </authorList>
    </citation>
    <scope>NUCLEOTIDE SEQUENCE [LARGE SCALE GENOMIC DNA]</scope>
    <source>
        <strain>ATCC BAA-161 / DSM 6008 / Z-2901</strain>
    </source>
</reference>
<protein>
    <recommendedName>
        <fullName evidence="1">Acetyl-coenzyme A carboxylase carboxyl transferase subunit beta</fullName>
        <shortName evidence="1">ACCase subunit beta</shortName>
        <shortName evidence="1">Acetyl-CoA carboxylase carboxyltransferase subunit beta</shortName>
        <ecNumber evidence="1">2.1.3.15</ecNumber>
    </recommendedName>
</protein>
<evidence type="ECO:0000255" key="1">
    <source>
        <dbReference type="HAMAP-Rule" id="MF_01395"/>
    </source>
</evidence>
<evidence type="ECO:0000255" key="2">
    <source>
        <dbReference type="PROSITE-ProRule" id="PRU01136"/>
    </source>
</evidence>